<evidence type="ECO:0000250" key="1"/>
<evidence type="ECO:0000255" key="2"/>
<evidence type="ECO:0000305" key="3"/>
<accession>P0AA65</accession>
<accession>P42614</accession>
<comment type="subcellular location">
    <subcellularLocation>
        <location evidence="1">Cell inner membrane</location>
        <topology evidence="1">Multi-pass membrane protein</topology>
    </subcellularLocation>
</comment>
<comment type="similarity">
    <text evidence="3">Belongs to the DedA family.</text>
</comment>
<protein>
    <recommendedName>
        <fullName>Inner membrane protein YqjA</fullName>
    </recommendedName>
</protein>
<feature type="chain" id="PRO_0000161419" description="Inner membrane protein YqjA">
    <location>
        <begin position="1"/>
        <end position="220"/>
    </location>
</feature>
<feature type="topological domain" description="Periplasmic" evidence="2">
    <location>
        <begin position="1"/>
        <end position="27"/>
    </location>
</feature>
<feature type="transmembrane region" description="Helical" evidence="2">
    <location>
        <begin position="28"/>
        <end position="48"/>
    </location>
</feature>
<feature type="topological domain" description="Cytoplasmic" evidence="2">
    <location>
        <begin position="49"/>
        <end position="52"/>
    </location>
</feature>
<feature type="transmembrane region" description="Helical" evidence="2">
    <location>
        <begin position="53"/>
        <end position="73"/>
    </location>
</feature>
<feature type="transmembrane region" description="Helical" evidence="2">
    <location>
        <begin position="74"/>
        <end position="94"/>
    </location>
</feature>
<feature type="topological domain" description="Cytoplasmic" evidence="2">
    <location>
        <begin position="95"/>
        <end position="154"/>
    </location>
</feature>
<feature type="transmembrane region" description="Helical" evidence="2">
    <location>
        <begin position="155"/>
        <end position="175"/>
    </location>
</feature>
<feature type="topological domain" description="Periplasmic" evidence="2">
    <location>
        <begin position="176"/>
        <end position="191"/>
    </location>
</feature>
<feature type="transmembrane region" description="Helical" evidence="2">
    <location>
        <begin position="192"/>
        <end position="212"/>
    </location>
</feature>
<feature type="topological domain" description="Cytoplasmic" evidence="2">
    <location>
        <begin position="213"/>
        <end position="220"/>
    </location>
</feature>
<gene>
    <name type="primary">yqjA</name>
    <name type="ordered locus">Z4449</name>
    <name type="ordered locus">ECs3977</name>
</gene>
<dbReference type="EMBL" id="AE005174">
    <property type="protein sequence ID" value="AAG58228.1"/>
    <property type="molecule type" value="Genomic_DNA"/>
</dbReference>
<dbReference type="EMBL" id="BA000007">
    <property type="protein sequence ID" value="BAB37400.1"/>
    <property type="molecule type" value="Genomic_DNA"/>
</dbReference>
<dbReference type="PIR" id="A91126">
    <property type="entry name" value="A91126"/>
</dbReference>
<dbReference type="PIR" id="H85970">
    <property type="entry name" value="H85970"/>
</dbReference>
<dbReference type="RefSeq" id="NP_312004.1">
    <property type="nucleotide sequence ID" value="NC_002695.1"/>
</dbReference>
<dbReference type="RefSeq" id="WP_000422149.1">
    <property type="nucleotide sequence ID" value="NZ_VOAI01000009.1"/>
</dbReference>
<dbReference type="STRING" id="155864.Z4449"/>
<dbReference type="GeneID" id="86947970"/>
<dbReference type="GeneID" id="916188"/>
<dbReference type="KEGG" id="ece:Z4449"/>
<dbReference type="KEGG" id="ecs:ECs_3977"/>
<dbReference type="PATRIC" id="fig|386585.9.peg.4151"/>
<dbReference type="eggNOG" id="COG0586">
    <property type="taxonomic scope" value="Bacteria"/>
</dbReference>
<dbReference type="HOGENOM" id="CLU_044208_6_2_6"/>
<dbReference type="OMA" id="MPLGGFY"/>
<dbReference type="Proteomes" id="UP000000558">
    <property type="component" value="Chromosome"/>
</dbReference>
<dbReference type="Proteomes" id="UP000002519">
    <property type="component" value="Chromosome"/>
</dbReference>
<dbReference type="GO" id="GO:0005886">
    <property type="term" value="C:plasma membrane"/>
    <property type="evidence" value="ECO:0007669"/>
    <property type="project" value="UniProtKB-SubCell"/>
</dbReference>
<dbReference type="InterPro" id="IPR032818">
    <property type="entry name" value="DedA-like"/>
</dbReference>
<dbReference type="InterPro" id="IPR032816">
    <property type="entry name" value="VTT_dom"/>
</dbReference>
<dbReference type="PANTHER" id="PTHR30353">
    <property type="entry name" value="INNER MEMBRANE PROTEIN DEDA-RELATED"/>
    <property type="match status" value="1"/>
</dbReference>
<dbReference type="PANTHER" id="PTHR30353:SF11">
    <property type="entry name" value="INNER MEMBRANE PROTEIN YQJA"/>
    <property type="match status" value="1"/>
</dbReference>
<dbReference type="Pfam" id="PF09335">
    <property type="entry name" value="VTT_dom"/>
    <property type="match status" value="1"/>
</dbReference>
<sequence>MELLTQLLQALWAQDFETLANPSMIGMLYFVLFVILFLENGLLPAAFLPGDSLLVLVGVLIAKGAMGYPQTILLLTVAASLGCWVSYIQGRWLGNTRTVQNWLSHLPAHYHQRAHHLFHKHGLSALLIGRFIAFVRTLLPTIAGLSGLNNARFQFFNWMSGLLWVLILTTLGYMLGKTPVFLKYEDQLMSCLMLLPVVLLVFGLAGSLVVLWKKKYGNRG</sequence>
<reference key="1">
    <citation type="journal article" date="2001" name="Nature">
        <title>Genome sequence of enterohaemorrhagic Escherichia coli O157:H7.</title>
        <authorList>
            <person name="Perna N.T."/>
            <person name="Plunkett G. III"/>
            <person name="Burland V."/>
            <person name="Mau B."/>
            <person name="Glasner J.D."/>
            <person name="Rose D.J."/>
            <person name="Mayhew G.F."/>
            <person name="Evans P.S."/>
            <person name="Gregor J."/>
            <person name="Kirkpatrick H.A."/>
            <person name="Posfai G."/>
            <person name="Hackett J."/>
            <person name="Klink S."/>
            <person name="Boutin A."/>
            <person name="Shao Y."/>
            <person name="Miller L."/>
            <person name="Grotbeck E.J."/>
            <person name="Davis N.W."/>
            <person name="Lim A."/>
            <person name="Dimalanta E.T."/>
            <person name="Potamousis K."/>
            <person name="Apodaca J."/>
            <person name="Anantharaman T.S."/>
            <person name="Lin J."/>
            <person name="Yen G."/>
            <person name="Schwartz D.C."/>
            <person name="Welch R.A."/>
            <person name="Blattner F.R."/>
        </authorList>
    </citation>
    <scope>NUCLEOTIDE SEQUENCE [LARGE SCALE GENOMIC DNA]</scope>
    <source>
        <strain>O157:H7 / EDL933 / ATCC 700927 / EHEC</strain>
    </source>
</reference>
<reference key="2">
    <citation type="journal article" date="2001" name="DNA Res.">
        <title>Complete genome sequence of enterohemorrhagic Escherichia coli O157:H7 and genomic comparison with a laboratory strain K-12.</title>
        <authorList>
            <person name="Hayashi T."/>
            <person name="Makino K."/>
            <person name="Ohnishi M."/>
            <person name="Kurokawa K."/>
            <person name="Ishii K."/>
            <person name="Yokoyama K."/>
            <person name="Han C.-G."/>
            <person name="Ohtsubo E."/>
            <person name="Nakayama K."/>
            <person name="Murata T."/>
            <person name="Tanaka M."/>
            <person name="Tobe T."/>
            <person name="Iida T."/>
            <person name="Takami H."/>
            <person name="Honda T."/>
            <person name="Sasakawa C."/>
            <person name="Ogasawara N."/>
            <person name="Yasunaga T."/>
            <person name="Kuhara S."/>
            <person name="Shiba T."/>
            <person name="Hattori M."/>
            <person name="Shinagawa H."/>
        </authorList>
    </citation>
    <scope>NUCLEOTIDE SEQUENCE [LARGE SCALE GENOMIC DNA]</scope>
    <source>
        <strain>O157:H7 / Sakai / RIMD 0509952 / EHEC</strain>
    </source>
</reference>
<name>YQJA_ECO57</name>
<keyword id="KW-0997">Cell inner membrane</keyword>
<keyword id="KW-1003">Cell membrane</keyword>
<keyword id="KW-0472">Membrane</keyword>
<keyword id="KW-1185">Reference proteome</keyword>
<keyword id="KW-0812">Transmembrane</keyword>
<keyword id="KW-1133">Transmembrane helix</keyword>
<proteinExistence type="inferred from homology"/>
<organism>
    <name type="scientific">Escherichia coli O157:H7</name>
    <dbReference type="NCBI Taxonomy" id="83334"/>
    <lineage>
        <taxon>Bacteria</taxon>
        <taxon>Pseudomonadati</taxon>
        <taxon>Pseudomonadota</taxon>
        <taxon>Gammaproteobacteria</taxon>
        <taxon>Enterobacterales</taxon>
        <taxon>Enterobacteriaceae</taxon>
        <taxon>Escherichia</taxon>
    </lineage>
</organism>